<dbReference type="EC" id="3.1.1.29" evidence="1"/>
<dbReference type="EMBL" id="CP000946">
    <property type="protein sequence ID" value="ACA78056.1"/>
    <property type="molecule type" value="Genomic_DNA"/>
</dbReference>
<dbReference type="RefSeq" id="WP_000152933.1">
    <property type="nucleotide sequence ID" value="NZ_MTFT01000016.1"/>
</dbReference>
<dbReference type="BMRB" id="B1IU89"/>
<dbReference type="SMR" id="B1IU89"/>
<dbReference type="GeneID" id="93775269"/>
<dbReference type="KEGG" id="ecl:EcolC_2422"/>
<dbReference type="HOGENOM" id="CLU_062456_3_1_6"/>
<dbReference type="GO" id="GO:0005737">
    <property type="term" value="C:cytoplasm"/>
    <property type="evidence" value="ECO:0007669"/>
    <property type="project" value="UniProtKB-SubCell"/>
</dbReference>
<dbReference type="GO" id="GO:0004045">
    <property type="term" value="F:peptidyl-tRNA hydrolase activity"/>
    <property type="evidence" value="ECO:0007669"/>
    <property type="project" value="UniProtKB-UniRule"/>
</dbReference>
<dbReference type="GO" id="GO:0000049">
    <property type="term" value="F:tRNA binding"/>
    <property type="evidence" value="ECO:0007669"/>
    <property type="project" value="UniProtKB-UniRule"/>
</dbReference>
<dbReference type="GO" id="GO:0006515">
    <property type="term" value="P:protein quality control for misfolded or incompletely synthesized proteins"/>
    <property type="evidence" value="ECO:0007669"/>
    <property type="project" value="UniProtKB-UniRule"/>
</dbReference>
<dbReference type="GO" id="GO:0072344">
    <property type="term" value="P:rescue of stalled ribosome"/>
    <property type="evidence" value="ECO:0007669"/>
    <property type="project" value="UniProtKB-UniRule"/>
</dbReference>
<dbReference type="CDD" id="cd00462">
    <property type="entry name" value="PTH"/>
    <property type="match status" value="1"/>
</dbReference>
<dbReference type="FunFam" id="3.40.50.1470:FF:000001">
    <property type="entry name" value="Peptidyl-tRNA hydrolase"/>
    <property type="match status" value="1"/>
</dbReference>
<dbReference type="Gene3D" id="3.40.50.1470">
    <property type="entry name" value="Peptidyl-tRNA hydrolase"/>
    <property type="match status" value="1"/>
</dbReference>
<dbReference type="HAMAP" id="MF_00083">
    <property type="entry name" value="Pept_tRNA_hydro_bact"/>
    <property type="match status" value="1"/>
</dbReference>
<dbReference type="InterPro" id="IPR001328">
    <property type="entry name" value="Pept_tRNA_hydro"/>
</dbReference>
<dbReference type="InterPro" id="IPR018171">
    <property type="entry name" value="Pept_tRNA_hydro_CS"/>
</dbReference>
<dbReference type="InterPro" id="IPR036416">
    <property type="entry name" value="Pept_tRNA_hydro_sf"/>
</dbReference>
<dbReference type="NCBIfam" id="TIGR00447">
    <property type="entry name" value="pth"/>
    <property type="match status" value="1"/>
</dbReference>
<dbReference type="PANTHER" id="PTHR17224">
    <property type="entry name" value="PEPTIDYL-TRNA HYDROLASE"/>
    <property type="match status" value="1"/>
</dbReference>
<dbReference type="PANTHER" id="PTHR17224:SF1">
    <property type="entry name" value="PEPTIDYL-TRNA HYDROLASE"/>
    <property type="match status" value="1"/>
</dbReference>
<dbReference type="Pfam" id="PF01195">
    <property type="entry name" value="Pept_tRNA_hydro"/>
    <property type="match status" value="1"/>
</dbReference>
<dbReference type="SUPFAM" id="SSF53178">
    <property type="entry name" value="Peptidyl-tRNA hydrolase-like"/>
    <property type="match status" value="1"/>
</dbReference>
<dbReference type="PROSITE" id="PS01195">
    <property type="entry name" value="PEPT_TRNA_HYDROL_1"/>
    <property type="match status" value="1"/>
</dbReference>
<dbReference type="PROSITE" id="PS01196">
    <property type="entry name" value="PEPT_TRNA_HYDROL_2"/>
    <property type="match status" value="1"/>
</dbReference>
<keyword id="KW-0963">Cytoplasm</keyword>
<keyword id="KW-0378">Hydrolase</keyword>
<keyword id="KW-0694">RNA-binding</keyword>
<keyword id="KW-0820">tRNA-binding</keyword>
<proteinExistence type="inferred from homology"/>
<protein>
    <recommendedName>
        <fullName evidence="1">Peptidyl-tRNA hydrolase</fullName>
        <shortName evidence="1">Pth</shortName>
        <ecNumber evidence="1">3.1.1.29</ecNumber>
    </recommendedName>
</protein>
<accession>B1IU89</accession>
<organism>
    <name type="scientific">Escherichia coli (strain ATCC 8739 / DSM 1576 / NBRC 3972 / NCIMB 8545 / WDCM 00012 / Crooks)</name>
    <dbReference type="NCBI Taxonomy" id="481805"/>
    <lineage>
        <taxon>Bacteria</taxon>
        <taxon>Pseudomonadati</taxon>
        <taxon>Pseudomonadota</taxon>
        <taxon>Gammaproteobacteria</taxon>
        <taxon>Enterobacterales</taxon>
        <taxon>Enterobacteriaceae</taxon>
        <taxon>Escherichia</taxon>
    </lineage>
</organism>
<feature type="chain" id="PRO_1000075340" description="Peptidyl-tRNA hydrolase">
    <location>
        <begin position="1"/>
        <end position="194"/>
    </location>
</feature>
<feature type="active site" description="Proton acceptor" evidence="1">
    <location>
        <position position="21"/>
    </location>
</feature>
<feature type="binding site" evidence="1">
    <location>
        <position position="16"/>
    </location>
    <ligand>
        <name>tRNA</name>
        <dbReference type="ChEBI" id="CHEBI:17843"/>
    </ligand>
</feature>
<feature type="binding site" evidence="1">
    <location>
        <position position="67"/>
    </location>
    <ligand>
        <name>tRNA</name>
        <dbReference type="ChEBI" id="CHEBI:17843"/>
    </ligand>
</feature>
<feature type="binding site" evidence="1">
    <location>
        <position position="69"/>
    </location>
    <ligand>
        <name>tRNA</name>
        <dbReference type="ChEBI" id="CHEBI:17843"/>
    </ligand>
</feature>
<feature type="binding site" evidence="1">
    <location>
        <position position="115"/>
    </location>
    <ligand>
        <name>tRNA</name>
        <dbReference type="ChEBI" id="CHEBI:17843"/>
    </ligand>
</feature>
<feature type="site" description="Discriminates between blocked and unblocked aminoacyl-tRNA" evidence="1">
    <location>
        <position position="11"/>
    </location>
</feature>
<feature type="site" description="Stabilizes the basic form of H active site to accept a proton" evidence="1">
    <location>
        <position position="94"/>
    </location>
</feature>
<comment type="function">
    <text evidence="1">Hydrolyzes ribosome-free peptidyl-tRNAs (with 1 or more amino acids incorporated), which drop off the ribosome during protein synthesis, or as a result of ribosome stalling.</text>
</comment>
<comment type="function">
    <text evidence="1">Catalyzes the release of premature peptidyl moieties from peptidyl-tRNA molecules trapped in stalled 50S ribosomal subunits, and thus maintains levels of free tRNAs and 50S ribosomes.</text>
</comment>
<comment type="catalytic activity">
    <reaction evidence="1">
        <text>an N-acyl-L-alpha-aminoacyl-tRNA + H2O = an N-acyl-L-amino acid + a tRNA + H(+)</text>
        <dbReference type="Rhea" id="RHEA:54448"/>
        <dbReference type="Rhea" id="RHEA-COMP:10123"/>
        <dbReference type="Rhea" id="RHEA-COMP:13883"/>
        <dbReference type="ChEBI" id="CHEBI:15377"/>
        <dbReference type="ChEBI" id="CHEBI:15378"/>
        <dbReference type="ChEBI" id="CHEBI:59874"/>
        <dbReference type="ChEBI" id="CHEBI:78442"/>
        <dbReference type="ChEBI" id="CHEBI:138191"/>
        <dbReference type="EC" id="3.1.1.29"/>
    </reaction>
</comment>
<comment type="subunit">
    <text evidence="1">Monomer.</text>
</comment>
<comment type="subcellular location">
    <subcellularLocation>
        <location evidence="1">Cytoplasm</location>
    </subcellularLocation>
</comment>
<comment type="similarity">
    <text evidence="1">Belongs to the PTH family.</text>
</comment>
<evidence type="ECO:0000255" key="1">
    <source>
        <dbReference type="HAMAP-Rule" id="MF_00083"/>
    </source>
</evidence>
<gene>
    <name evidence="1" type="primary">pth</name>
    <name type="ordered locus">EcolC_2422</name>
</gene>
<sequence>MTIKLIVGLANPGAEYAATRHNAGAWFVDLLAERLRAPLREEAKFFGYTSRVTLGGEDVRLLVPTTFMNLSGKAVAAMASFFRINPDEILVAHDELDLPPGVAKFKLGGGHGGHNGLKDIISKLGNNPNFHRLRIGIGHPGDKNKVVGFVLGKPPVSEQKLIDEAIDEAARCTEMWFTDGLTKATNRLHAFKAQ</sequence>
<name>PTH_ECOLC</name>
<reference key="1">
    <citation type="submission" date="2008-02" db="EMBL/GenBank/DDBJ databases">
        <title>Complete sequence of Escherichia coli C str. ATCC 8739.</title>
        <authorList>
            <person name="Copeland A."/>
            <person name="Lucas S."/>
            <person name="Lapidus A."/>
            <person name="Glavina del Rio T."/>
            <person name="Dalin E."/>
            <person name="Tice H."/>
            <person name="Bruce D."/>
            <person name="Goodwin L."/>
            <person name="Pitluck S."/>
            <person name="Kiss H."/>
            <person name="Brettin T."/>
            <person name="Detter J.C."/>
            <person name="Han C."/>
            <person name="Kuske C.R."/>
            <person name="Schmutz J."/>
            <person name="Larimer F."/>
            <person name="Land M."/>
            <person name="Hauser L."/>
            <person name="Kyrpides N."/>
            <person name="Mikhailova N."/>
            <person name="Ingram L."/>
            <person name="Richardson P."/>
        </authorList>
    </citation>
    <scope>NUCLEOTIDE SEQUENCE [LARGE SCALE GENOMIC DNA]</scope>
    <source>
        <strain>ATCC 8739 / DSM 1576 / NBRC 3972 / NCIMB 8545 / WDCM 00012 / Crooks</strain>
    </source>
</reference>